<gene>
    <name evidence="1" type="primary">RPS1</name>
    <name type="ordered locus">ZYRO0B14234g</name>
</gene>
<comment type="subunit">
    <text evidence="1">Component of the small ribosomal subunit. Mature ribosomes consist of a small (40S) and a large (60S) subunit. The 40S subunit contains about 33 different proteins and 1 molecule of RNA (18S). The 60S subunit contains about 49 different proteins and 3 molecules of RNA (25S, 5.8S and 5S).</text>
</comment>
<comment type="subcellular location">
    <subcellularLocation>
        <location evidence="1">Cytoplasm</location>
    </subcellularLocation>
</comment>
<comment type="similarity">
    <text evidence="1">Belongs to the eukaryotic ribosomal protein eS1 family.</text>
</comment>
<feature type="initiator methionine" description="Removed" evidence="1">
    <location>
        <position position="1"/>
    </location>
</feature>
<feature type="chain" id="PRO_0000389419" description="Small ribosomal subunit protein eS1">
    <location>
        <begin position="2"/>
        <end position="254"/>
    </location>
</feature>
<feature type="modified residue" description="N-acetylalanine; partial" evidence="1">
    <location>
        <position position="2"/>
    </location>
</feature>
<accession>C5DS65</accession>
<name>RS3A_ZYGRC</name>
<evidence type="ECO:0000255" key="1">
    <source>
        <dbReference type="HAMAP-Rule" id="MF_03122"/>
    </source>
</evidence>
<evidence type="ECO:0000305" key="2"/>
<dbReference type="EMBL" id="CU928174">
    <property type="protein sequence ID" value="CAR26626.1"/>
    <property type="molecule type" value="Genomic_DNA"/>
</dbReference>
<dbReference type="RefSeq" id="XP_002495559.1">
    <property type="nucleotide sequence ID" value="XM_002495514.1"/>
</dbReference>
<dbReference type="SMR" id="C5DS65"/>
<dbReference type="FunCoup" id="C5DS65">
    <property type="interactions" value="1488"/>
</dbReference>
<dbReference type="STRING" id="559307.C5DS65"/>
<dbReference type="GeneID" id="8202725"/>
<dbReference type="KEGG" id="zro:ZYRO0B14234g"/>
<dbReference type="HOGENOM" id="CLU_062507_0_0_1"/>
<dbReference type="InParanoid" id="C5DS65"/>
<dbReference type="Proteomes" id="UP000008536">
    <property type="component" value="Chromosome B"/>
</dbReference>
<dbReference type="GO" id="GO:0022627">
    <property type="term" value="C:cytosolic small ribosomal subunit"/>
    <property type="evidence" value="ECO:0007669"/>
    <property type="project" value="UniProtKB-UniRule"/>
</dbReference>
<dbReference type="GO" id="GO:0003735">
    <property type="term" value="F:structural constituent of ribosome"/>
    <property type="evidence" value="ECO:0007669"/>
    <property type="project" value="UniProtKB-UniRule"/>
</dbReference>
<dbReference type="GO" id="GO:0006412">
    <property type="term" value="P:translation"/>
    <property type="evidence" value="ECO:0007669"/>
    <property type="project" value="UniProtKB-UniRule"/>
</dbReference>
<dbReference type="HAMAP" id="MF_03122">
    <property type="entry name" value="Ribosomal_eS1_euk"/>
    <property type="match status" value="1"/>
</dbReference>
<dbReference type="InterPro" id="IPR001593">
    <property type="entry name" value="Ribosomal_eS1"/>
</dbReference>
<dbReference type="InterPro" id="IPR018281">
    <property type="entry name" value="Ribosomal_eS1_CS"/>
</dbReference>
<dbReference type="InterPro" id="IPR027500">
    <property type="entry name" value="Ribosomal_eS1_euk"/>
</dbReference>
<dbReference type="PANTHER" id="PTHR11830">
    <property type="entry name" value="40S RIBOSOMAL PROTEIN S3A"/>
    <property type="match status" value="1"/>
</dbReference>
<dbReference type="Pfam" id="PF01015">
    <property type="entry name" value="Ribosomal_S3Ae"/>
    <property type="match status" value="1"/>
</dbReference>
<dbReference type="SMART" id="SM01397">
    <property type="entry name" value="Ribosomal_S3Ae"/>
    <property type="match status" value="1"/>
</dbReference>
<dbReference type="PROSITE" id="PS01191">
    <property type="entry name" value="RIBOSOMAL_S3AE"/>
    <property type="match status" value="1"/>
</dbReference>
<sequence>MAVGKNKRLSKGKKGLKKRVVDPFSKKEWYDIKAPSTFKNRNVGKTLVNRSAGLKSASDTLKGRVVEACLADLQGSEDHSFRKIKLRVDEVQGKNLLTNIHGMDFTTDKYRSMVRKWQTLIEAQVTVKTSDEYVIRVFAIAFTRKQPNQVKKTCYAQSSHIRAIRKVFSEILTREVQNSTLAQFTSKLIPEVINKEMENATKDIFPLQNVHVRKVKLLKQPKFDLGSLMALHGEGSDETGKKVSGFKDEILETV</sequence>
<protein>
    <recommendedName>
        <fullName evidence="1">Small ribosomal subunit protein eS1</fullName>
    </recommendedName>
    <alternativeName>
        <fullName evidence="2">40S ribosomal protein S1</fullName>
    </alternativeName>
</protein>
<keyword id="KW-0007">Acetylation</keyword>
<keyword id="KW-0963">Cytoplasm</keyword>
<keyword id="KW-1185">Reference proteome</keyword>
<keyword id="KW-0687">Ribonucleoprotein</keyword>
<keyword id="KW-0689">Ribosomal protein</keyword>
<organism>
    <name type="scientific">Zygosaccharomyces rouxii (strain ATCC 2623 / CBS 732 / NBRC 1130 / NCYC 568 / NRRL Y-229)</name>
    <dbReference type="NCBI Taxonomy" id="559307"/>
    <lineage>
        <taxon>Eukaryota</taxon>
        <taxon>Fungi</taxon>
        <taxon>Dikarya</taxon>
        <taxon>Ascomycota</taxon>
        <taxon>Saccharomycotina</taxon>
        <taxon>Saccharomycetes</taxon>
        <taxon>Saccharomycetales</taxon>
        <taxon>Saccharomycetaceae</taxon>
        <taxon>Zygosaccharomyces</taxon>
    </lineage>
</organism>
<reference key="1">
    <citation type="journal article" date="2009" name="Genome Res.">
        <title>Comparative genomics of protoploid Saccharomycetaceae.</title>
        <authorList>
            <consortium name="The Genolevures Consortium"/>
            <person name="Souciet J.-L."/>
            <person name="Dujon B."/>
            <person name="Gaillardin C."/>
            <person name="Johnston M."/>
            <person name="Baret P.V."/>
            <person name="Cliften P."/>
            <person name="Sherman D.J."/>
            <person name="Weissenbach J."/>
            <person name="Westhof E."/>
            <person name="Wincker P."/>
            <person name="Jubin C."/>
            <person name="Poulain J."/>
            <person name="Barbe V."/>
            <person name="Segurens B."/>
            <person name="Artiguenave F."/>
            <person name="Anthouard V."/>
            <person name="Vacherie B."/>
            <person name="Val M.-E."/>
            <person name="Fulton R.S."/>
            <person name="Minx P."/>
            <person name="Wilson R."/>
            <person name="Durrens P."/>
            <person name="Jean G."/>
            <person name="Marck C."/>
            <person name="Martin T."/>
            <person name="Nikolski M."/>
            <person name="Rolland T."/>
            <person name="Seret M.-L."/>
            <person name="Casaregola S."/>
            <person name="Despons L."/>
            <person name="Fairhead C."/>
            <person name="Fischer G."/>
            <person name="Lafontaine I."/>
            <person name="Leh V."/>
            <person name="Lemaire M."/>
            <person name="de Montigny J."/>
            <person name="Neuveglise C."/>
            <person name="Thierry A."/>
            <person name="Blanc-Lenfle I."/>
            <person name="Bleykasten C."/>
            <person name="Diffels J."/>
            <person name="Fritsch E."/>
            <person name="Frangeul L."/>
            <person name="Goeffon A."/>
            <person name="Jauniaux N."/>
            <person name="Kachouri-Lafond R."/>
            <person name="Payen C."/>
            <person name="Potier S."/>
            <person name="Pribylova L."/>
            <person name="Ozanne C."/>
            <person name="Richard G.-F."/>
            <person name="Sacerdot C."/>
            <person name="Straub M.-L."/>
            <person name="Talla E."/>
        </authorList>
    </citation>
    <scope>NUCLEOTIDE SEQUENCE [LARGE SCALE GENOMIC DNA]</scope>
    <source>
        <strain>ATCC 2623 / CBS 732 / BCRC 21506 / NBRC 1130 / NCYC 568 / NRRL Y-229</strain>
    </source>
</reference>
<proteinExistence type="inferred from homology"/>